<reference key="1">
    <citation type="journal article" date="2003" name="Nucleic Acids Res.">
        <title>What's in the genome of a filamentous fungus? Analysis of the Neurospora genome sequence.</title>
        <authorList>
            <person name="Mannhaupt G."/>
            <person name="Montrone C."/>
            <person name="Haase D."/>
            <person name="Mewes H.-W."/>
            <person name="Aign V."/>
            <person name="Hoheisel J.D."/>
            <person name="Fartmann B."/>
            <person name="Nyakatura G."/>
            <person name="Kempken F."/>
            <person name="Maier J."/>
            <person name="Schulte U."/>
        </authorList>
    </citation>
    <scope>NUCLEOTIDE SEQUENCE [LARGE SCALE GENOMIC DNA]</scope>
    <source>
        <strain>ATCC 24698 / 74-OR23-1A / CBS 708.71 / DSM 1257 / FGSC 987</strain>
    </source>
</reference>
<reference key="2">
    <citation type="journal article" date="2003" name="Nature">
        <title>The genome sequence of the filamentous fungus Neurospora crassa.</title>
        <authorList>
            <person name="Galagan J.E."/>
            <person name="Calvo S.E."/>
            <person name="Borkovich K.A."/>
            <person name="Selker E.U."/>
            <person name="Read N.D."/>
            <person name="Jaffe D.B."/>
            <person name="FitzHugh W."/>
            <person name="Ma L.-J."/>
            <person name="Smirnov S."/>
            <person name="Purcell S."/>
            <person name="Rehman B."/>
            <person name="Elkins T."/>
            <person name="Engels R."/>
            <person name="Wang S."/>
            <person name="Nielsen C.B."/>
            <person name="Butler J."/>
            <person name="Endrizzi M."/>
            <person name="Qui D."/>
            <person name="Ianakiev P."/>
            <person name="Bell-Pedersen D."/>
            <person name="Nelson M.A."/>
            <person name="Werner-Washburne M."/>
            <person name="Selitrennikoff C.P."/>
            <person name="Kinsey J.A."/>
            <person name="Braun E.L."/>
            <person name="Zelter A."/>
            <person name="Schulte U."/>
            <person name="Kothe G.O."/>
            <person name="Jedd G."/>
            <person name="Mewes H.-W."/>
            <person name="Staben C."/>
            <person name="Marcotte E."/>
            <person name="Greenberg D."/>
            <person name="Roy A."/>
            <person name="Foley K."/>
            <person name="Naylor J."/>
            <person name="Stange-Thomann N."/>
            <person name="Barrett R."/>
            <person name="Gnerre S."/>
            <person name="Kamal M."/>
            <person name="Kamvysselis M."/>
            <person name="Mauceli E.W."/>
            <person name="Bielke C."/>
            <person name="Rudd S."/>
            <person name="Frishman D."/>
            <person name="Krystofova S."/>
            <person name="Rasmussen C."/>
            <person name="Metzenberg R.L."/>
            <person name="Perkins D.D."/>
            <person name="Kroken S."/>
            <person name="Cogoni C."/>
            <person name="Macino G."/>
            <person name="Catcheside D.E.A."/>
            <person name="Li W."/>
            <person name="Pratt R.J."/>
            <person name="Osmani S.A."/>
            <person name="DeSouza C.P.C."/>
            <person name="Glass N.L."/>
            <person name="Orbach M.J."/>
            <person name="Berglund J.A."/>
            <person name="Voelker R."/>
            <person name="Yarden O."/>
            <person name="Plamann M."/>
            <person name="Seiler S."/>
            <person name="Dunlap J.C."/>
            <person name="Radford A."/>
            <person name="Aramayo R."/>
            <person name="Natvig D.O."/>
            <person name="Alex L.A."/>
            <person name="Mannhaupt G."/>
            <person name="Ebbole D.J."/>
            <person name="Freitag M."/>
            <person name="Paulsen I."/>
            <person name="Sachs M.S."/>
            <person name="Lander E.S."/>
            <person name="Nusbaum C."/>
            <person name="Birren B.W."/>
        </authorList>
    </citation>
    <scope>NUCLEOTIDE SEQUENCE [LARGE SCALE GENOMIC DNA]</scope>
    <source>
        <strain>ATCC 24698 / 74-OR23-1A / CBS 708.71 / DSM 1257 / FGSC 987</strain>
    </source>
</reference>
<evidence type="ECO:0000250" key="1"/>
<evidence type="ECO:0000255" key="2"/>
<evidence type="ECO:0000256" key="3">
    <source>
        <dbReference type="SAM" id="MobiDB-lite"/>
    </source>
</evidence>
<comment type="subcellular location">
    <subcellularLocation>
        <location evidence="1">Vacuole</location>
    </subcellularLocation>
</comment>
<name>YFAS1_NEUCR</name>
<sequence>MRFTPYLVLAPTAAVAFAQLFDPLHRTASDIQQQSQSQSVNHAQIPLAKPAVGLGPAMPPSGAPQADGPANAGGGSSVMLSDVMGRDKSINLFAGFLRSIESPSQRLDDPARNTTVLAPLNSAIENLPRKPWEDPRDYSALGANAYEGEDGQGRAQRNLRRFVEAHLIPTSPWPAGEKIKPVGGDTEVWWEEKDGVKRIQPGDIEVLNVGSSVVNGEVWILKGVRNAS</sequence>
<protein>
    <recommendedName>
        <fullName>FAS1 domain-containing protein NCU02579</fullName>
    </recommendedName>
</protein>
<dbReference type="EMBL" id="BX842632">
    <property type="protein sequence ID" value="CAE76422.1"/>
    <property type="molecule type" value="Genomic_DNA"/>
</dbReference>
<dbReference type="EMBL" id="CM002236">
    <property type="protein sequence ID" value="EAA36474.2"/>
    <property type="molecule type" value="Genomic_DNA"/>
</dbReference>
<dbReference type="RefSeq" id="XP_965710.2">
    <property type="nucleotide sequence ID" value="XM_960617.2"/>
</dbReference>
<dbReference type="SMR" id="Q6MV78"/>
<dbReference type="STRING" id="367110.Q6MV78"/>
<dbReference type="PaxDb" id="5141-EFNCRP00000002005"/>
<dbReference type="EnsemblFungi" id="EAA36474">
    <property type="protein sequence ID" value="EAA36474"/>
    <property type="gene ID" value="NCU02579"/>
</dbReference>
<dbReference type="GeneID" id="3881860"/>
<dbReference type="KEGG" id="ncr:NCU02579"/>
<dbReference type="VEuPathDB" id="FungiDB:NCU02579"/>
<dbReference type="HOGENOM" id="CLU_091398_2_0_1"/>
<dbReference type="InParanoid" id="Q6MV78"/>
<dbReference type="OrthoDB" id="5551751at2759"/>
<dbReference type="Proteomes" id="UP000001805">
    <property type="component" value="Chromosome 1, Linkage Group I"/>
</dbReference>
<dbReference type="GO" id="GO:0005773">
    <property type="term" value="C:vacuole"/>
    <property type="evidence" value="ECO:0007669"/>
    <property type="project" value="UniProtKB-SubCell"/>
</dbReference>
<dbReference type="InterPro" id="IPR036378">
    <property type="entry name" value="FAS1_dom_sf"/>
</dbReference>
<dbReference type="InterPro" id="IPR040200">
    <property type="entry name" value="Mug57-like"/>
</dbReference>
<dbReference type="PANTHER" id="PTHR28156">
    <property type="entry name" value="FAS1 DOMAIN-CONTAINING PROTEIN YDR262W"/>
    <property type="match status" value="1"/>
</dbReference>
<dbReference type="PANTHER" id="PTHR28156:SF1">
    <property type="entry name" value="FAS1 DOMAIN-CONTAINING PROTEIN YDR262W"/>
    <property type="match status" value="1"/>
</dbReference>
<dbReference type="SUPFAM" id="SSF82153">
    <property type="entry name" value="FAS1 domain"/>
    <property type="match status" value="1"/>
</dbReference>
<proteinExistence type="inferred from homology"/>
<feature type="signal peptide" evidence="2">
    <location>
        <begin position="1"/>
        <end position="18"/>
    </location>
</feature>
<feature type="chain" id="PRO_0000008798" description="FAS1 domain-containing protein NCU02579">
    <location>
        <begin position="19"/>
        <end position="228"/>
    </location>
</feature>
<feature type="domain" description="FAS1">
    <location>
        <begin position="77"/>
        <end position="225"/>
    </location>
</feature>
<feature type="region of interest" description="Disordered" evidence="3">
    <location>
        <begin position="50"/>
        <end position="74"/>
    </location>
</feature>
<keyword id="KW-1185">Reference proteome</keyword>
<keyword id="KW-0732">Signal</keyword>
<keyword id="KW-0926">Vacuole</keyword>
<accession>Q6MV78</accession>
<accession>Q7SHN8</accession>
<organism>
    <name type="scientific">Neurospora crassa (strain ATCC 24698 / 74-OR23-1A / CBS 708.71 / DSM 1257 / FGSC 987)</name>
    <dbReference type="NCBI Taxonomy" id="367110"/>
    <lineage>
        <taxon>Eukaryota</taxon>
        <taxon>Fungi</taxon>
        <taxon>Dikarya</taxon>
        <taxon>Ascomycota</taxon>
        <taxon>Pezizomycotina</taxon>
        <taxon>Sordariomycetes</taxon>
        <taxon>Sordariomycetidae</taxon>
        <taxon>Sordariales</taxon>
        <taxon>Sordariaceae</taxon>
        <taxon>Neurospora</taxon>
    </lineage>
</organism>
<gene>
    <name type="ORF">B5K2.060</name>
    <name type="ORF">NCU02579</name>
</gene>